<evidence type="ECO:0000255" key="1">
    <source>
        <dbReference type="HAMAP-Rule" id="MF_00418"/>
    </source>
</evidence>
<evidence type="ECO:0000305" key="2"/>
<protein>
    <recommendedName>
        <fullName evidence="1">4-hydroxy-tetrahydrodipicolinate synthase</fullName>
        <shortName evidence="1">HTPA synthase</shortName>
        <ecNumber evidence="1">4.3.3.7</ecNumber>
    </recommendedName>
</protein>
<sequence>MFTGSIVALITPMDDNGDVDRASLKSLIDYHVASGTAAIVSVGTTGESATLNHDEHVDVVMQTLELAGGRIPVIAGTGANSTSEAISLTQRFNDTGVVGCLTVTPYYNRPMQEGLYQHFKAIAESTDLPQILYNVPSRTGCDMLPPTIARLAKIKNIVAVKEATGNLSRVSQIQVLVDDEDFILLSGDDASGLDFMQLGGKGVISVTANIAAREMVELCALAAQGNFAEGRRLNQRLMPLHQHLFVEANPIPVKWAAKRLGLMANDTMRLPMTPLTDPAKRIVEDALKSAGLL</sequence>
<organism>
    <name type="scientific">Yersinia pseudotuberculosis serotype I (strain IP32953)</name>
    <dbReference type="NCBI Taxonomy" id="273123"/>
    <lineage>
        <taxon>Bacteria</taxon>
        <taxon>Pseudomonadati</taxon>
        <taxon>Pseudomonadota</taxon>
        <taxon>Gammaproteobacteria</taxon>
        <taxon>Enterobacterales</taxon>
        <taxon>Yersiniaceae</taxon>
        <taxon>Yersinia</taxon>
    </lineage>
</organism>
<gene>
    <name evidence="1" type="primary">dapA</name>
    <name type="ordered locus">YPTB2783</name>
</gene>
<dbReference type="EC" id="4.3.3.7" evidence="1"/>
<dbReference type="EMBL" id="BX936398">
    <property type="protein sequence ID" value="CAH22021.1"/>
    <property type="status" value="ALT_INIT"/>
    <property type="molecule type" value="Genomic_DNA"/>
</dbReference>
<dbReference type="RefSeq" id="WP_032466692.1">
    <property type="nucleotide sequence ID" value="NC_006155.1"/>
</dbReference>
<dbReference type="SMR" id="Q668F7"/>
<dbReference type="GeneID" id="49785204"/>
<dbReference type="KEGG" id="ypo:BZ17_3847"/>
<dbReference type="KEGG" id="yps:YPTB2783"/>
<dbReference type="PATRIC" id="fig|273123.14.peg.4038"/>
<dbReference type="UniPathway" id="UPA00034">
    <property type="reaction ID" value="UER00017"/>
</dbReference>
<dbReference type="Proteomes" id="UP000001011">
    <property type="component" value="Chromosome"/>
</dbReference>
<dbReference type="GO" id="GO:0005829">
    <property type="term" value="C:cytosol"/>
    <property type="evidence" value="ECO:0007669"/>
    <property type="project" value="TreeGrafter"/>
</dbReference>
<dbReference type="GO" id="GO:0008840">
    <property type="term" value="F:4-hydroxy-tetrahydrodipicolinate synthase activity"/>
    <property type="evidence" value="ECO:0007669"/>
    <property type="project" value="UniProtKB-UniRule"/>
</dbReference>
<dbReference type="GO" id="GO:0019877">
    <property type="term" value="P:diaminopimelate biosynthetic process"/>
    <property type="evidence" value="ECO:0007669"/>
    <property type="project" value="UniProtKB-UniRule"/>
</dbReference>
<dbReference type="GO" id="GO:0009089">
    <property type="term" value="P:lysine biosynthetic process via diaminopimelate"/>
    <property type="evidence" value="ECO:0007669"/>
    <property type="project" value="UniProtKB-UniRule"/>
</dbReference>
<dbReference type="CDD" id="cd00950">
    <property type="entry name" value="DHDPS"/>
    <property type="match status" value="1"/>
</dbReference>
<dbReference type="FunFam" id="3.20.20.70:FF:000046">
    <property type="entry name" value="4-hydroxy-tetrahydrodipicolinate synthase"/>
    <property type="match status" value="1"/>
</dbReference>
<dbReference type="Gene3D" id="3.20.20.70">
    <property type="entry name" value="Aldolase class I"/>
    <property type="match status" value="1"/>
</dbReference>
<dbReference type="HAMAP" id="MF_00418">
    <property type="entry name" value="DapA"/>
    <property type="match status" value="1"/>
</dbReference>
<dbReference type="InterPro" id="IPR013785">
    <property type="entry name" value="Aldolase_TIM"/>
</dbReference>
<dbReference type="InterPro" id="IPR005263">
    <property type="entry name" value="DapA"/>
</dbReference>
<dbReference type="InterPro" id="IPR002220">
    <property type="entry name" value="DapA-like"/>
</dbReference>
<dbReference type="InterPro" id="IPR020625">
    <property type="entry name" value="Schiff_base-form_aldolases_AS"/>
</dbReference>
<dbReference type="InterPro" id="IPR020624">
    <property type="entry name" value="Schiff_base-form_aldolases_CS"/>
</dbReference>
<dbReference type="NCBIfam" id="TIGR00674">
    <property type="entry name" value="dapA"/>
    <property type="match status" value="1"/>
</dbReference>
<dbReference type="PANTHER" id="PTHR12128:SF66">
    <property type="entry name" value="4-HYDROXY-2-OXOGLUTARATE ALDOLASE, MITOCHONDRIAL"/>
    <property type="match status" value="1"/>
</dbReference>
<dbReference type="PANTHER" id="PTHR12128">
    <property type="entry name" value="DIHYDRODIPICOLINATE SYNTHASE"/>
    <property type="match status" value="1"/>
</dbReference>
<dbReference type="Pfam" id="PF00701">
    <property type="entry name" value="DHDPS"/>
    <property type="match status" value="1"/>
</dbReference>
<dbReference type="PIRSF" id="PIRSF001365">
    <property type="entry name" value="DHDPS"/>
    <property type="match status" value="1"/>
</dbReference>
<dbReference type="PRINTS" id="PR00146">
    <property type="entry name" value="DHPICSNTHASE"/>
</dbReference>
<dbReference type="SMART" id="SM01130">
    <property type="entry name" value="DHDPS"/>
    <property type="match status" value="1"/>
</dbReference>
<dbReference type="SUPFAM" id="SSF51569">
    <property type="entry name" value="Aldolase"/>
    <property type="match status" value="1"/>
</dbReference>
<dbReference type="PROSITE" id="PS00665">
    <property type="entry name" value="DHDPS_1"/>
    <property type="match status" value="1"/>
</dbReference>
<dbReference type="PROSITE" id="PS00666">
    <property type="entry name" value="DHDPS_2"/>
    <property type="match status" value="1"/>
</dbReference>
<comment type="function">
    <text evidence="1">Catalyzes the condensation of (S)-aspartate-beta-semialdehyde [(S)-ASA] and pyruvate to 4-hydroxy-tetrahydrodipicolinate (HTPA).</text>
</comment>
<comment type="catalytic activity">
    <reaction evidence="1">
        <text>L-aspartate 4-semialdehyde + pyruvate = (2S,4S)-4-hydroxy-2,3,4,5-tetrahydrodipicolinate + H2O + H(+)</text>
        <dbReference type="Rhea" id="RHEA:34171"/>
        <dbReference type="ChEBI" id="CHEBI:15361"/>
        <dbReference type="ChEBI" id="CHEBI:15377"/>
        <dbReference type="ChEBI" id="CHEBI:15378"/>
        <dbReference type="ChEBI" id="CHEBI:67139"/>
        <dbReference type="ChEBI" id="CHEBI:537519"/>
        <dbReference type="EC" id="4.3.3.7"/>
    </reaction>
</comment>
<comment type="pathway">
    <text evidence="1">Amino-acid biosynthesis; L-lysine biosynthesis via DAP pathway; (S)-tetrahydrodipicolinate from L-aspartate: step 3/4.</text>
</comment>
<comment type="subunit">
    <text evidence="1">Homotetramer; dimer of dimers.</text>
</comment>
<comment type="subcellular location">
    <subcellularLocation>
        <location evidence="1">Cytoplasm</location>
    </subcellularLocation>
</comment>
<comment type="similarity">
    <text evidence="1">Belongs to the DapA family.</text>
</comment>
<comment type="caution">
    <text evidence="2">Was originally thought to be a dihydrodipicolinate synthase (DHDPS), catalyzing the condensation of (S)-aspartate-beta-semialdehyde [(S)-ASA] and pyruvate to dihydrodipicolinate (DHDP). However, it was shown in E.coli that the product of the enzymatic reaction is not dihydrodipicolinate but in fact (4S)-4-hydroxy-2,3,4,5-tetrahydro-(2S)-dipicolinic acid (HTPA), and that the consecutive dehydration reaction leading to DHDP is not spontaneous but catalyzed by DapB.</text>
</comment>
<comment type="sequence caution" evidence="2">
    <conflict type="erroneous initiation">
        <sequence resource="EMBL-CDS" id="CAH22021"/>
    </conflict>
</comment>
<proteinExistence type="inferred from homology"/>
<reference key="1">
    <citation type="journal article" date="2004" name="Proc. Natl. Acad. Sci. U.S.A.">
        <title>Insights into the evolution of Yersinia pestis through whole-genome comparison with Yersinia pseudotuberculosis.</title>
        <authorList>
            <person name="Chain P.S.G."/>
            <person name="Carniel E."/>
            <person name="Larimer F.W."/>
            <person name="Lamerdin J."/>
            <person name="Stoutland P.O."/>
            <person name="Regala W.M."/>
            <person name="Georgescu A.M."/>
            <person name="Vergez L.M."/>
            <person name="Land M.L."/>
            <person name="Motin V.L."/>
            <person name="Brubaker R.R."/>
            <person name="Fowler J."/>
            <person name="Hinnebusch J."/>
            <person name="Marceau M."/>
            <person name="Medigue C."/>
            <person name="Simonet M."/>
            <person name="Chenal-Francisque V."/>
            <person name="Souza B."/>
            <person name="Dacheux D."/>
            <person name="Elliott J.M."/>
            <person name="Derbise A."/>
            <person name="Hauser L.J."/>
            <person name="Garcia E."/>
        </authorList>
    </citation>
    <scope>NUCLEOTIDE SEQUENCE [LARGE SCALE GENOMIC DNA]</scope>
    <source>
        <strain>IP32953</strain>
    </source>
</reference>
<keyword id="KW-0028">Amino-acid biosynthesis</keyword>
<keyword id="KW-0963">Cytoplasm</keyword>
<keyword id="KW-0220">Diaminopimelate biosynthesis</keyword>
<keyword id="KW-0456">Lyase</keyword>
<keyword id="KW-0457">Lysine biosynthesis</keyword>
<keyword id="KW-0704">Schiff base</keyword>
<accession>Q668F7</accession>
<feature type="chain" id="PRO_0000103191" description="4-hydroxy-tetrahydrodipicolinate synthase">
    <location>
        <begin position="1"/>
        <end position="293"/>
    </location>
</feature>
<feature type="active site" description="Proton donor/acceptor" evidence="1">
    <location>
        <position position="133"/>
    </location>
</feature>
<feature type="active site" description="Schiff-base intermediate with substrate" evidence="1">
    <location>
        <position position="161"/>
    </location>
</feature>
<feature type="binding site" evidence="1">
    <location>
        <position position="45"/>
    </location>
    <ligand>
        <name>pyruvate</name>
        <dbReference type="ChEBI" id="CHEBI:15361"/>
    </ligand>
</feature>
<feature type="binding site" evidence="1">
    <location>
        <position position="204"/>
    </location>
    <ligand>
        <name>pyruvate</name>
        <dbReference type="ChEBI" id="CHEBI:15361"/>
    </ligand>
</feature>
<feature type="site" description="Part of a proton relay during catalysis" evidence="1">
    <location>
        <position position="44"/>
    </location>
</feature>
<feature type="site" description="Part of a proton relay during catalysis" evidence="1">
    <location>
        <position position="107"/>
    </location>
</feature>
<name>DAPA_YERPS</name>